<reference key="1">
    <citation type="journal article" date="1994" name="J. Clin. Microbiol.">
        <title>The superoxide dismutase gene, a target for detection and identification of mycobacteria by PCR.</title>
        <authorList>
            <person name="Zolg J.W."/>
            <person name="Philippi-Schulz S."/>
        </authorList>
    </citation>
    <scope>NUCLEOTIDE SEQUENCE [GENOMIC DNA]</scope>
    <source>
        <strain>DSM 43224 / SN 502</strain>
    </source>
</reference>
<feature type="chain" id="PRO_0000160051" description="Superoxide dismutase [Mn]">
    <location>
        <begin position="1" status="less than"/>
        <end position="163" status="greater than"/>
    </location>
</feature>
<feature type="binding site" evidence="1">
    <location>
        <position position="2"/>
    </location>
    <ligand>
        <name>Mn(2+)</name>
        <dbReference type="ChEBI" id="CHEBI:29035"/>
    </ligand>
</feature>
<feature type="binding site" evidence="1">
    <location>
        <position position="50"/>
    </location>
    <ligand>
        <name>Mn(2+)</name>
        <dbReference type="ChEBI" id="CHEBI:29035"/>
    </ligand>
</feature>
<feature type="binding site" evidence="1">
    <location>
        <position position="134"/>
    </location>
    <ligand>
        <name>Mn(2+)</name>
        <dbReference type="ChEBI" id="CHEBI:29035"/>
    </ligand>
</feature>
<feature type="binding site" evidence="1">
    <location>
        <position position="138"/>
    </location>
    <ligand>
        <name>Mn(2+)</name>
        <dbReference type="ChEBI" id="CHEBI:29035"/>
    </ligand>
</feature>
<feature type="non-terminal residue">
    <location>
        <position position="1"/>
    </location>
</feature>
<feature type="non-terminal residue">
    <location>
        <position position="163"/>
    </location>
</feature>
<name>SODM_MYCKA</name>
<protein>
    <recommendedName>
        <fullName>Superoxide dismutase [Mn]</fullName>
        <ecNumber>1.15.1.1</ecNumber>
    </recommendedName>
</protein>
<dbReference type="EC" id="1.15.1.1"/>
<dbReference type="EMBL" id="X81388">
    <property type="protein sequence ID" value="CAA57151.1"/>
    <property type="molecule type" value="Genomic_DNA"/>
</dbReference>
<dbReference type="SMR" id="P50912"/>
<dbReference type="STRING" id="1768.B1T50_14400"/>
<dbReference type="GO" id="GO:0046872">
    <property type="term" value="F:metal ion binding"/>
    <property type="evidence" value="ECO:0007669"/>
    <property type="project" value="UniProtKB-KW"/>
</dbReference>
<dbReference type="GO" id="GO:0004784">
    <property type="term" value="F:superoxide dismutase activity"/>
    <property type="evidence" value="ECO:0007669"/>
    <property type="project" value="UniProtKB-EC"/>
</dbReference>
<dbReference type="FunFam" id="1.10.287.990:FF:000001">
    <property type="entry name" value="Superoxide dismutase"/>
    <property type="match status" value="1"/>
</dbReference>
<dbReference type="FunFam" id="3.55.40.20:FF:000004">
    <property type="entry name" value="Superoxide dismutase [Fe]"/>
    <property type="match status" value="1"/>
</dbReference>
<dbReference type="Gene3D" id="1.10.287.990">
    <property type="entry name" value="Fe,Mn superoxide dismutase (SOD) domain"/>
    <property type="match status" value="1"/>
</dbReference>
<dbReference type="Gene3D" id="3.55.40.20">
    <property type="entry name" value="Iron/manganese superoxide dismutase, C-terminal domain"/>
    <property type="match status" value="1"/>
</dbReference>
<dbReference type="InterPro" id="IPR050265">
    <property type="entry name" value="Fe/Mn_Superoxide_Dismutase"/>
</dbReference>
<dbReference type="InterPro" id="IPR001189">
    <property type="entry name" value="Mn/Fe_SOD"/>
</dbReference>
<dbReference type="InterPro" id="IPR019833">
    <property type="entry name" value="Mn/Fe_SOD_BS"/>
</dbReference>
<dbReference type="InterPro" id="IPR019832">
    <property type="entry name" value="Mn/Fe_SOD_C"/>
</dbReference>
<dbReference type="InterPro" id="IPR019831">
    <property type="entry name" value="Mn/Fe_SOD_N"/>
</dbReference>
<dbReference type="InterPro" id="IPR036324">
    <property type="entry name" value="Mn/Fe_SOD_N_sf"/>
</dbReference>
<dbReference type="InterPro" id="IPR036314">
    <property type="entry name" value="SOD_C_sf"/>
</dbReference>
<dbReference type="PANTHER" id="PTHR11404">
    <property type="entry name" value="SUPEROXIDE DISMUTASE 2"/>
    <property type="match status" value="1"/>
</dbReference>
<dbReference type="PANTHER" id="PTHR11404:SF6">
    <property type="entry name" value="SUPEROXIDE DISMUTASE [MN], MITOCHONDRIAL"/>
    <property type="match status" value="1"/>
</dbReference>
<dbReference type="Pfam" id="PF02777">
    <property type="entry name" value="Sod_Fe_C"/>
    <property type="match status" value="1"/>
</dbReference>
<dbReference type="Pfam" id="PF00081">
    <property type="entry name" value="Sod_Fe_N"/>
    <property type="match status" value="1"/>
</dbReference>
<dbReference type="PIRSF" id="PIRSF000349">
    <property type="entry name" value="SODismutase"/>
    <property type="match status" value="1"/>
</dbReference>
<dbReference type="PRINTS" id="PR01703">
    <property type="entry name" value="MNSODISMTASE"/>
</dbReference>
<dbReference type="SUPFAM" id="SSF54719">
    <property type="entry name" value="Fe,Mn superoxide dismutase (SOD), C-terminal domain"/>
    <property type="match status" value="1"/>
</dbReference>
<dbReference type="SUPFAM" id="SSF46609">
    <property type="entry name" value="Fe,Mn superoxide dismutase (SOD), N-terminal domain"/>
    <property type="match status" value="1"/>
</dbReference>
<dbReference type="PROSITE" id="PS00088">
    <property type="entry name" value="SOD_MN"/>
    <property type="match status" value="1"/>
</dbReference>
<gene>
    <name type="primary">sodA</name>
    <name type="synonym">sod</name>
</gene>
<organism>
    <name type="scientific">Mycobacterium kansasii</name>
    <dbReference type="NCBI Taxonomy" id="1768"/>
    <lineage>
        <taxon>Bacteria</taxon>
        <taxon>Bacillati</taxon>
        <taxon>Actinomycetota</taxon>
        <taxon>Actinomycetes</taxon>
        <taxon>Mycobacteriales</taxon>
        <taxon>Mycobacteriaceae</taxon>
        <taxon>Mycobacterium</taxon>
    </lineage>
</organism>
<accession>P50912</accession>
<comment type="function">
    <text>Destroys superoxide anion radicals which are normally produced within the cells and which are toxic to biological systems.</text>
</comment>
<comment type="catalytic activity">
    <reaction>
        <text>2 superoxide + 2 H(+) = H2O2 + O2</text>
        <dbReference type="Rhea" id="RHEA:20696"/>
        <dbReference type="ChEBI" id="CHEBI:15378"/>
        <dbReference type="ChEBI" id="CHEBI:15379"/>
        <dbReference type="ChEBI" id="CHEBI:16240"/>
        <dbReference type="ChEBI" id="CHEBI:18421"/>
        <dbReference type="EC" id="1.15.1.1"/>
    </reaction>
</comment>
<comment type="cofactor">
    <cofactor evidence="1">
        <name>Mn(2+)</name>
        <dbReference type="ChEBI" id="CHEBI:29035"/>
    </cofactor>
    <text evidence="1">Binds 1 Mn(2+) ion per subunit.</text>
</comment>
<comment type="similarity">
    <text evidence="2">Belongs to the iron/manganese superoxide dismutase family.</text>
</comment>
<evidence type="ECO:0000250" key="1"/>
<evidence type="ECO:0000305" key="2"/>
<keyword id="KW-0464">Manganese</keyword>
<keyword id="KW-0479">Metal-binding</keyword>
<keyword id="KW-0560">Oxidoreductase</keyword>
<proteinExistence type="inferred from homology"/>
<sequence>LHHSKHHATYVKGANDAVAKLEEARAKEDHSAILLNEKNLAFNLAGHVNHTIWWKNLSPNGGDKPTGELAAAIDEAFGSFDKFRAQFHAAATTVQGSGWAALGWDTLGNKLLIFQVYDHQTNFPLGIIPLLLLDMWEHAFYLQYKNVKVDFAKAFWNVVNWDD</sequence>